<evidence type="ECO:0000255" key="1">
    <source>
        <dbReference type="HAMAP-Rule" id="MF_00180"/>
    </source>
</evidence>
<name>RIBB_HISS1</name>
<feature type="chain" id="PRO_1000040613" description="3,4-dihydroxy-2-butanone 4-phosphate synthase">
    <location>
        <begin position="1"/>
        <end position="212"/>
    </location>
</feature>
<feature type="binding site" evidence="1">
    <location>
        <begin position="37"/>
        <end position="38"/>
    </location>
    <ligand>
        <name>D-ribulose 5-phosphate</name>
        <dbReference type="ChEBI" id="CHEBI:58121"/>
    </ligand>
</feature>
<feature type="binding site" evidence="1">
    <location>
        <position position="38"/>
    </location>
    <ligand>
        <name>Mg(2+)</name>
        <dbReference type="ChEBI" id="CHEBI:18420"/>
        <label>1</label>
    </ligand>
</feature>
<feature type="binding site" evidence="1">
    <location>
        <position position="38"/>
    </location>
    <ligand>
        <name>Mg(2+)</name>
        <dbReference type="ChEBI" id="CHEBI:18420"/>
        <label>2</label>
    </ligand>
</feature>
<feature type="binding site" evidence="1">
    <location>
        <position position="42"/>
    </location>
    <ligand>
        <name>D-ribulose 5-phosphate</name>
        <dbReference type="ChEBI" id="CHEBI:58121"/>
    </ligand>
</feature>
<feature type="binding site" evidence="1">
    <location>
        <begin position="150"/>
        <end position="154"/>
    </location>
    <ligand>
        <name>D-ribulose 5-phosphate</name>
        <dbReference type="ChEBI" id="CHEBI:58121"/>
    </ligand>
</feature>
<feature type="binding site" evidence="1">
    <location>
        <position position="153"/>
    </location>
    <ligand>
        <name>Mg(2+)</name>
        <dbReference type="ChEBI" id="CHEBI:18420"/>
        <label>2</label>
    </ligand>
</feature>
<feature type="binding site" evidence="1">
    <location>
        <position position="174"/>
    </location>
    <ligand>
        <name>D-ribulose 5-phosphate</name>
        <dbReference type="ChEBI" id="CHEBI:58121"/>
    </ligand>
</feature>
<feature type="site" description="Essential for catalytic activity" evidence="1">
    <location>
        <position position="136"/>
    </location>
</feature>
<feature type="site" description="Essential for catalytic activity" evidence="1">
    <location>
        <position position="174"/>
    </location>
</feature>
<accession>Q0I132</accession>
<dbReference type="EC" id="4.1.99.12" evidence="1"/>
<dbReference type="EMBL" id="CP000436">
    <property type="protein sequence ID" value="ABI24370.1"/>
    <property type="molecule type" value="Genomic_DNA"/>
</dbReference>
<dbReference type="SMR" id="Q0I132"/>
<dbReference type="KEGG" id="hso:HS_0089"/>
<dbReference type="eggNOG" id="COG0108">
    <property type="taxonomic scope" value="Bacteria"/>
</dbReference>
<dbReference type="HOGENOM" id="CLU_020273_3_0_6"/>
<dbReference type="UniPathway" id="UPA00275">
    <property type="reaction ID" value="UER00399"/>
</dbReference>
<dbReference type="GO" id="GO:0005829">
    <property type="term" value="C:cytosol"/>
    <property type="evidence" value="ECO:0007669"/>
    <property type="project" value="TreeGrafter"/>
</dbReference>
<dbReference type="GO" id="GO:0008686">
    <property type="term" value="F:3,4-dihydroxy-2-butanone-4-phosphate synthase activity"/>
    <property type="evidence" value="ECO:0007669"/>
    <property type="project" value="UniProtKB-UniRule"/>
</dbReference>
<dbReference type="GO" id="GO:0000287">
    <property type="term" value="F:magnesium ion binding"/>
    <property type="evidence" value="ECO:0007669"/>
    <property type="project" value="UniProtKB-UniRule"/>
</dbReference>
<dbReference type="GO" id="GO:0030145">
    <property type="term" value="F:manganese ion binding"/>
    <property type="evidence" value="ECO:0007669"/>
    <property type="project" value="UniProtKB-UniRule"/>
</dbReference>
<dbReference type="GO" id="GO:0009231">
    <property type="term" value="P:riboflavin biosynthetic process"/>
    <property type="evidence" value="ECO:0007669"/>
    <property type="project" value="UniProtKB-UniRule"/>
</dbReference>
<dbReference type="FunFam" id="3.90.870.10:FF:000002">
    <property type="entry name" value="3,4-dihydroxy-2-butanone 4-phosphate synthase"/>
    <property type="match status" value="1"/>
</dbReference>
<dbReference type="Gene3D" id="3.90.870.10">
    <property type="entry name" value="DHBP synthase"/>
    <property type="match status" value="1"/>
</dbReference>
<dbReference type="HAMAP" id="MF_00180">
    <property type="entry name" value="RibB"/>
    <property type="match status" value="1"/>
</dbReference>
<dbReference type="InterPro" id="IPR017945">
    <property type="entry name" value="DHBP_synth_RibB-like_a/b_dom"/>
</dbReference>
<dbReference type="InterPro" id="IPR000422">
    <property type="entry name" value="DHBP_synthase_RibB"/>
</dbReference>
<dbReference type="NCBIfam" id="TIGR00506">
    <property type="entry name" value="ribB"/>
    <property type="match status" value="1"/>
</dbReference>
<dbReference type="PANTHER" id="PTHR21327:SF38">
    <property type="entry name" value="3,4-DIHYDROXY-2-BUTANONE 4-PHOSPHATE SYNTHASE"/>
    <property type="match status" value="1"/>
</dbReference>
<dbReference type="PANTHER" id="PTHR21327">
    <property type="entry name" value="GTP CYCLOHYDROLASE II-RELATED"/>
    <property type="match status" value="1"/>
</dbReference>
<dbReference type="Pfam" id="PF00926">
    <property type="entry name" value="DHBP_synthase"/>
    <property type="match status" value="1"/>
</dbReference>
<dbReference type="SUPFAM" id="SSF55821">
    <property type="entry name" value="YrdC/RibB"/>
    <property type="match status" value="1"/>
</dbReference>
<proteinExistence type="inferred from homology"/>
<reference key="1">
    <citation type="journal article" date="2007" name="J. Bacteriol.">
        <title>Complete genome sequence of Haemophilus somnus (Histophilus somni) strain 129Pt and comparison to Haemophilus ducreyi 35000HP and Haemophilus influenzae Rd.</title>
        <authorList>
            <person name="Challacombe J.F."/>
            <person name="Duncan A.J."/>
            <person name="Brettin T.S."/>
            <person name="Bruce D."/>
            <person name="Chertkov O."/>
            <person name="Detter J.C."/>
            <person name="Han C.S."/>
            <person name="Misra M."/>
            <person name="Richardson P."/>
            <person name="Tapia R."/>
            <person name="Thayer N."/>
            <person name="Xie G."/>
            <person name="Inzana T.J."/>
        </authorList>
    </citation>
    <scope>NUCLEOTIDE SEQUENCE [LARGE SCALE GENOMIC DNA]</scope>
    <source>
        <strain>129Pt</strain>
    </source>
</reference>
<sequence>MNQSLLSQFGTSEERVKRAIEAFKRGNGVLVLDDEDRENEGDLIFPAETITVEQMAKLIRYGSGIVCLCITDELCQQLDLSPMVQNNTSINQTAFTVSIEAAQGVSTGVSAQDRVTTIQAAIADNAKPQDLSRPGHVFPLRAKKGGVLARRGHTEAAVDLASWAGHKPAGVICEITNDDGSMARTPEIVEFGKKFNYPVVTIEDLVRYASNK</sequence>
<comment type="function">
    <text evidence="1">Catalyzes the conversion of D-ribulose 5-phosphate to formate and 3,4-dihydroxy-2-butanone 4-phosphate.</text>
</comment>
<comment type="catalytic activity">
    <reaction evidence="1">
        <text>D-ribulose 5-phosphate = (2S)-2-hydroxy-3-oxobutyl phosphate + formate + H(+)</text>
        <dbReference type="Rhea" id="RHEA:18457"/>
        <dbReference type="ChEBI" id="CHEBI:15378"/>
        <dbReference type="ChEBI" id="CHEBI:15740"/>
        <dbReference type="ChEBI" id="CHEBI:58121"/>
        <dbReference type="ChEBI" id="CHEBI:58830"/>
        <dbReference type="EC" id="4.1.99.12"/>
    </reaction>
</comment>
<comment type="cofactor">
    <cofactor evidence="1">
        <name>Mg(2+)</name>
        <dbReference type="ChEBI" id="CHEBI:18420"/>
    </cofactor>
    <cofactor evidence="1">
        <name>Mn(2+)</name>
        <dbReference type="ChEBI" id="CHEBI:29035"/>
    </cofactor>
    <text evidence="1">Binds 2 divalent metal cations per subunit. Magnesium or manganese.</text>
</comment>
<comment type="pathway">
    <text evidence="1">Cofactor biosynthesis; riboflavin biosynthesis; 2-hydroxy-3-oxobutyl phosphate from D-ribulose 5-phosphate: step 1/1.</text>
</comment>
<comment type="subunit">
    <text evidence="1">Homodimer.</text>
</comment>
<comment type="similarity">
    <text evidence="1">Belongs to the DHBP synthase family.</text>
</comment>
<organism>
    <name type="scientific">Histophilus somni (strain 129Pt)</name>
    <name type="common">Haemophilus somnus</name>
    <dbReference type="NCBI Taxonomy" id="205914"/>
    <lineage>
        <taxon>Bacteria</taxon>
        <taxon>Pseudomonadati</taxon>
        <taxon>Pseudomonadota</taxon>
        <taxon>Gammaproteobacteria</taxon>
        <taxon>Pasteurellales</taxon>
        <taxon>Pasteurellaceae</taxon>
        <taxon>Histophilus</taxon>
    </lineage>
</organism>
<keyword id="KW-0456">Lyase</keyword>
<keyword id="KW-0460">Magnesium</keyword>
<keyword id="KW-0464">Manganese</keyword>
<keyword id="KW-0479">Metal-binding</keyword>
<keyword id="KW-0686">Riboflavin biosynthesis</keyword>
<protein>
    <recommendedName>
        <fullName evidence="1">3,4-dihydroxy-2-butanone 4-phosphate synthase</fullName>
        <shortName evidence="1">DHBP synthase</shortName>
        <ecNumber evidence="1">4.1.99.12</ecNumber>
    </recommendedName>
</protein>
<gene>
    <name evidence="1" type="primary">ribB</name>
    <name type="ordered locus">HS_0089</name>
</gene>